<comment type="catalytic activity">
    <reaction evidence="1">
        <text>L-histidinol phosphate + 2-oxoglutarate = 3-(imidazol-4-yl)-2-oxopropyl phosphate + L-glutamate</text>
        <dbReference type="Rhea" id="RHEA:23744"/>
        <dbReference type="ChEBI" id="CHEBI:16810"/>
        <dbReference type="ChEBI" id="CHEBI:29985"/>
        <dbReference type="ChEBI" id="CHEBI:57766"/>
        <dbReference type="ChEBI" id="CHEBI:57980"/>
        <dbReference type="EC" id="2.6.1.9"/>
    </reaction>
</comment>
<comment type="cofactor">
    <cofactor evidence="1">
        <name>pyridoxal 5'-phosphate</name>
        <dbReference type="ChEBI" id="CHEBI:597326"/>
    </cofactor>
</comment>
<comment type="pathway">
    <text evidence="1">Amino-acid biosynthesis; L-histidine biosynthesis; L-histidine from 5-phospho-alpha-D-ribose 1-diphosphate: step 7/9.</text>
</comment>
<comment type="subunit">
    <text evidence="1">Homodimer.</text>
</comment>
<comment type="similarity">
    <text evidence="1">Belongs to the class-II pyridoxal-phosphate-dependent aminotransferase family. Histidinol-phosphate aminotransferase subfamily.</text>
</comment>
<accession>A1TKZ0</accession>
<gene>
    <name evidence="1" type="primary">hisC</name>
    <name type="ordered locus">Aave_1031</name>
</gene>
<reference key="1">
    <citation type="submission" date="2006-12" db="EMBL/GenBank/DDBJ databases">
        <title>Complete sequence of Acidovorax avenae subsp. citrulli AAC00-1.</title>
        <authorList>
            <person name="Copeland A."/>
            <person name="Lucas S."/>
            <person name="Lapidus A."/>
            <person name="Barry K."/>
            <person name="Detter J.C."/>
            <person name="Glavina del Rio T."/>
            <person name="Dalin E."/>
            <person name="Tice H."/>
            <person name="Pitluck S."/>
            <person name="Kiss H."/>
            <person name="Brettin T."/>
            <person name="Bruce D."/>
            <person name="Han C."/>
            <person name="Tapia R."/>
            <person name="Gilna P."/>
            <person name="Schmutz J."/>
            <person name="Larimer F."/>
            <person name="Land M."/>
            <person name="Hauser L."/>
            <person name="Kyrpides N."/>
            <person name="Kim E."/>
            <person name="Stahl D."/>
            <person name="Richardson P."/>
        </authorList>
    </citation>
    <scope>NUCLEOTIDE SEQUENCE [LARGE SCALE GENOMIC DNA]</scope>
    <source>
        <strain>AAC00-1</strain>
    </source>
</reference>
<proteinExistence type="inferred from homology"/>
<evidence type="ECO:0000255" key="1">
    <source>
        <dbReference type="HAMAP-Rule" id="MF_01023"/>
    </source>
</evidence>
<organism>
    <name type="scientific">Paracidovorax citrulli (strain AAC00-1)</name>
    <name type="common">Acidovorax citrulli</name>
    <dbReference type="NCBI Taxonomy" id="397945"/>
    <lineage>
        <taxon>Bacteria</taxon>
        <taxon>Pseudomonadati</taxon>
        <taxon>Pseudomonadota</taxon>
        <taxon>Betaproteobacteria</taxon>
        <taxon>Burkholderiales</taxon>
        <taxon>Comamonadaceae</taxon>
        <taxon>Paracidovorax</taxon>
    </lineage>
</organism>
<feature type="chain" id="PRO_1000063454" description="Histidinol-phosphate aminotransferase">
    <location>
        <begin position="1"/>
        <end position="370"/>
    </location>
</feature>
<feature type="modified residue" description="N6-(pyridoxal phosphate)lysine" evidence="1">
    <location>
        <position position="231"/>
    </location>
</feature>
<name>HIS8_PARC0</name>
<sequence length="370" mass="39825">MTDTLAAALGRIRPDVRAMHAYAVQPATGVLKMDAMENPFPLPPELQEALGRRLGALALNRYPGARLTDLKSALAAHIGMPEGFSMVLGNGSDEIITLLALACARPGTGERAAMLAPMPGFVMYPMSAQLQGLDFVAVPLTADFELDEPAMLAAIAQHRPAITYLAYPNNPTATLWDEGAVQRVIDAAGAQGGIVVMDEAYQPFASRTWLDRMRAEPVRNAHVLLMRTLSKFGLAGVRLGYLAGPAALVDEIEKVRPPYNVSVLNCEAALFALEHARVFAAQAAELRAVRTRLVAALRAMPGIERVWDSEANMVLVRVPDAARAFEGMKARKVLVKNVSTMHPLLARCLRLTVGSEADNAQMLDALQASL</sequence>
<keyword id="KW-0028">Amino-acid biosynthesis</keyword>
<keyword id="KW-0032">Aminotransferase</keyword>
<keyword id="KW-0368">Histidine biosynthesis</keyword>
<keyword id="KW-0663">Pyridoxal phosphate</keyword>
<keyword id="KW-0808">Transferase</keyword>
<dbReference type="EC" id="2.6.1.9" evidence="1"/>
<dbReference type="EMBL" id="CP000512">
    <property type="protein sequence ID" value="ABM31628.1"/>
    <property type="molecule type" value="Genomic_DNA"/>
</dbReference>
<dbReference type="RefSeq" id="WP_011794186.1">
    <property type="nucleotide sequence ID" value="NC_008752.1"/>
</dbReference>
<dbReference type="SMR" id="A1TKZ0"/>
<dbReference type="STRING" id="397945.Aave_1031"/>
<dbReference type="GeneID" id="79790686"/>
<dbReference type="KEGG" id="aav:Aave_1031"/>
<dbReference type="eggNOG" id="COG0079">
    <property type="taxonomic scope" value="Bacteria"/>
</dbReference>
<dbReference type="HOGENOM" id="CLU_017584_3_1_4"/>
<dbReference type="OrthoDB" id="9813612at2"/>
<dbReference type="UniPathway" id="UPA00031">
    <property type="reaction ID" value="UER00012"/>
</dbReference>
<dbReference type="Proteomes" id="UP000002596">
    <property type="component" value="Chromosome"/>
</dbReference>
<dbReference type="GO" id="GO:0004400">
    <property type="term" value="F:histidinol-phosphate transaminase activity"/>
    <property type="evidence" value="ECO:0007669"/>
    <property type="project" value="UniProtKB-UniRule"/>
</dbReference>
<dbReference type="GO" id="GO:0030170">
    <property type="term" value="F:pyridoxal phosphate binding"/>
    <property type="evidence" value="ECO:0007669"/>
    <property type="project" value="InterPro"/>
</dbReference>
<dbReference type="GO" id="GO:0000105">
    <property type="term" value="P:L-histidine biosynthetic process"/>
    <property type="evidence" value="ECO:0007669"/>
    <property type="project" value="UniProtKB-UniRule"/>
</dbReference>
<dbReference type="CDD" id="cd00609">
    <property type="entry name" value="AAT_like"/>
    <property type="match status" value="1"/>
</dbReference>
<dbReference type="Gene3D" id="3.90.1150.10">
    <property type="entry name" value="Aspartate Aminotransferase, domain 1"/>
    <property type="match status" value="1"/>
</dbReference>
<dbReference type="Gene3D" id="3.40.640.10">
    <property type="entry name" value="Type I PLP-dependent aspartate aminotransferase-like (Major domain)"/>
    <property type="match status" value="1"/>
</dbReference>
<dbReference type="HAMAP" id="MF_01023">
    <property type="entry name" value="HisC_aminotrans_2"/>
    <property type="match status" value="1"/>
</dbReference>
<dbReference type="InterPro" id="IPR004839">
    <property type="entry name" value="Aminotransferase_I/II_large"/>
</dbReference>
<dbReference type="InterPro" id="IPR005861">
    <property type="entry name" value="HisP_aminotrans"/>
</dbReference>
<dbReference type="InterPro" id="IPR015424">
    <property type="entry name" value="PyrdxlP-dep_Trfase"/>
</dbReference>
<dbReference type="InterPro" id="IPR015421">
    <property type="entry name" value="PyrdxlP-dep_Trfase_major"/>
</dbReference>
<dbReference type="InterPro" id="IPR015422">
    <property type="entry name" value="PyrdxlP-dep_Trfase_small"/>
</dbReference>
<dbReference type="NCBIfam" id="TIGR01141">
    <property type="entry name" value="hisC"/>
    <property type="match status" value="1"/>
</dbReference>
<dbReference type="PANTHER" id="PTHR42885:SF2">
    <property type="entry name" value="HISTIDINOL-PHOSPHATE AMINOTRANSFERASE"/>
    <property type="match status" value="1"/>
</dbReference>
<dbReference type="PANTHER" id="PTHR42885">
    <property type="entry name" value="HISTIDINOL-PHOSPHATE AMINOTRANSFERASE-RELATED"/>
    <property type="match status" value="1"/>
</dbReference>
<dbReference type="Pfam" id="PF00155">
    <property type="entry name" value="Aminotran_1_2"/>
    <property type="match status" value="1"/>
</dbReference>
<dbReference type="SUPFAM" id="SSF53383">
    <property type="entry name" value="PLP-dependent transferases"/>
    <property type="match status" value="1"/>
</dbReference>
<protein>
    <recommendedName>
        <fullName evidence="1">Histidinol-phosphate aminotransferase</fullName>
        <ecNumber evidence="1">2.6.1.9</ecNumber>
    </recommendedName>
    <alternativeName>
        <fullName evidence="1">Imidazole acetol-phosphate transaminase</fullName>
    </alternativeName>
</protein>